<dbReference type="EMBL" id="K01964">
    <property type="status" value="NOT_ANNOTATED_CDS"/>
    <property type="molecule type" value="Genomic_DNA"/>
</dbReference>
<dbReference type="PIR" id="A04522">
    <property type="entry name" value="QQZMCA"/>
</dbReference>
<dbReference type="MaizeGDB" id="69193"/>
<dbReference type="InParanoid" id="P03936"/>
<dbReference type="Proteomes" id="UP000007305">
    <property type="component" value="Unplaced"/>
</dbReference>
<name>YAC9_MAIZE</name>
<evidence type="ECO:0000256" key="1">
    <source>
        <dbReference type="SAM" id="MobiDB-lite"/>
    </source>
</evidence>
<proteinExistence type="predicted"/>
<comment type="miscellaneous">
    <text>This protein is coded by the transposable maize controlling element 'Activator' (Ac), which is able to activate chromosome breakage at a specific location.</text>
</comment>
<keyword id="KW-1185">Reference proteome</keyword>
<keyword id="KW-0814">Transposable element</keyword>
<accession>P03936</accession>
<reference key="1">
    <citation type="journal article" date="1984" name="Cell">
        <title>The nucleotide sequence of the maize controlling element Activator.</title>
        <authorList>
            <person name="Pohlman R.F."/>
            <person name="Fedoroff N.V."/>
            <person name="Messing J."/>
        </authorList>
    </citation>
    <scope>NUCLEOTIDE SEQUENCE [GENOMIC DNA]</scope>
</reference>
<protein>
    <recommendedName>
        <fullName>Transposable element activator uncharacterized 23 kDa protein</fullName>
        <shortName>AC 23 kDa protein</shortName>
    </recommendedName>
</protein>
<organism>
    <name type="scientific">Zea mays</name>
    <name type="common">Maize</name>
    <dbReference type="NCBI Taxonomy" id="4577"/>
    <lineage>
        <taxon>Eukaryota</taxon>
        <taxon>Viridiplantae</taxon>
        <taxon>Streptophyta</taxon>
        <taxon>Embryophyta</taxon>
        <taxon>Tracheophyta</taxon>
        <taxon>Spermatophyta</taxon>
        <taxon>Magnoliopsida</taxon>
        <taxon>Liliopsida</taxon>
        <taxon>Poales</taxon>
        <taxon>Poaceae</taxon>
        <taxon>PACMAD clade</taxon>
        <taxon>Panicoideae</taxon>
        <taxon>Andropogonodae</taxon>
        <taxon>Andropogoneae</taxon>
        <taxon>Tripsacinae</taxon>
        <taxon>Zea</taxon>
    </lineage>
</organism>
<feature type="chain" id="PRO_0000066109" description="Transposable element activator uncharacterized 23 kDa protein">
    <location>
        <begin position="1"/>
        <end position="210"/>
    </location>
</feature>
<feature type="region of interest" description="Disordered" evidence="1">
    <location>
        <begin position="67"/>
        <end position="87"/>
    </location>
</feature>
<feature type="compositionally biased region" description="Basic and acidic residues" evidence="1">
    <location>
        <begin position="67"/>
        <end position="78"/>
    </location>
</feature>
<sequence>MTQQLGAMVLTCCTAKCCEPVSSRGDRETADGRMGERRAVEVWRTADRRWRMADGRTADGRAVEWRSGRMGGPRRDGRVASSGVEGGPWMAASASGVPRHGRHRVWCLVQPSGRPAGRQGESERAGESETRVGVGVRLAASGLRRGRVAACECVMLLLVWCLPPGREAEQRSLGISYMGWASVVMDGSWSWPYCSHPELENTVTKRDHPD</sequence>